<sequence length="90" mass="10568">MSRIVNCVKLKREAEGLDFPPYPGELGTRIWQQISKEAWEEWKQIQTRLVNENRLNLADARARKYLQQQMERFLFEDGTVEAQGYVPPSA</sequence>
<proteinExistence type="inferred from homology"/>
<reference key="1">
    <citation type="journal article" date="2003" name="Nat. Genet.">
        <title>Comparative analysis of the genome sequences of Bordetella pertussis, Bordetella parapertussis and Bordetella bronchiseptica.</title>
        <authorList>
            <person name="Parkhill J."/>
            <person name="Sebaihia M."/>
            <person name="Preston A."/>
            <person name="Murphy L.D."/>
            <person name="Thomson N.R."/>
            <person name="Harris D.E."/>
            <person name="Holden M.T.G."/>
            <person name="Churcher C.M."/>
            <person name="Bentley S.D."/>
            <person name="Mungall K.L."/>
            <person name="Cerdeno-Tarraga A.-M."/>
            <person name="Temple L."/>
            <person name="James K.D."/>
            <person name="Harris B."/>
            <person name="Quail M.A."/>
            <person name="Achtman M."/>
            <person name="Atkin R."/>
            <person name="Baker S."/>
            <person name="Basham D."/>
            <person name="Bason N."/>
            <person name="Cherevach I."/>
            <person name="Chillingworth T."/>
            <person name="Collins M."/>
            <person name="Cronin A."/>
            <person name="Davis P."/>
            <person name="Doggett J."/>
            <person name="Feltwell T."/>
            <person name="Goble A."/>
            <person name="Hamlin N."/>
            <person name="Hauser H."/>
            <person name="Holroyd S."/>
            <person name="Jagels K."/>
            <person name="Leather S."/>
            <person name="Moule S."/>
            <person name="Norberczak H."/>
            <person name="O'Neil S."/>
            <person name="Ormond D."/>
            <person name="Price C."/>
            <person name="Rabbinowitsch E."/>
            <person name="Rutter S."/>
            <person name="Sanders M."/>
            <person name="Saunders D."/>
            <person name="Seeger K."/>
            <person name="Sharp S."/>
            <person name="Simmonds M."/>
            <person name="Skelton J."/>
            <person name="Squares R."/>
            <person name="Squares S."/>
            <person name="Stevens K."/>
            <person name="Unwin L."/>
            <person name="Whitehead S."/>
            <person name="Barrell B.G."/>
            <person name="Maskell D.J."/>
        </authorList>
    </citation>
    <scope>NUCLEOTIDE SEQUENCE [LARGE SCALE GENOMIC DNA]</scope>
    <source>
        <strain>12822 / ATCC BAA-587 / NCTC 13253</strain>
    </source>
</reference>
<feature type="chain" id="PRO_0000214468" description="Probable Fe(2+)-trafficking protein">
    <location>
        <begin position="1"/>
        <end position="90"/>
    </location>
</feature>
<dbReference type="EMBL" id="BX640428">
    <property type="protein sequence ID" value="CAE37004.1"/>
    <property type="molecule type" value="Genomic_DNA"/>
</dbReference>
<dbReference type="RefSeq" id="WP_003813239.1">
    <property type="nucleotide sequence ID" value="NC_002928.3"/>
</dbReference>
<dbReference type="SMR" id="Q7W9Q2"/>
<dbReference type="KEGG" id="bpa:BPP1703"/>
<dbReference type="HOGENOM" id="CLU_170994_0_0_4"/>
<dbReference type="Proteomes" id="UP000001421">
    <property type="component" value="Chromosome"/>
</dbReference>
<dbReference type="GO" id="GO:0005829">
    <property type="term" value="C:cytosol"/>
    <property type="evidence" value="ECO:0007669"/>
    <property type="project" value="TreeGrafter"/>
</dbReference>
<dbReference type="GO" id="GO:0005506">
    <property type="term" value="F:iron ion binding"/>
    <property type="evidence" value="ECO:0007669"/>
    <property type="project" value="UniProtKB-UniRule"/>
</dbReference>
<dbReference type="GO" id="GO:0034599">
    <property type="term" value="P:cellular response to oxidative stress"/>
    <property type="evidence" value="ECO:0007669"/>
    <property type="project" value="TreeGrafter"/>
</dbReference>
<dbReference type="FunFam" id="1.10.3880.10:FF:000001">
    <property type="entry name" value="Probable Fe(2+)-trafficking protein"/>
    <property type="match status" value="1"/>
</dbReference>
<dbReference type="Gene3D" id="1.10.3880.10">
    <property type="entry name" value="Fe(II) trafficking protein YggX"/>
    <property type="match status" value="1"/>
</dbReference>
<dbReference type="HAMAP" id="MF_00686">
    <property type="entry name" value="Fe_traffic_YggX"/>
    <property type="match status" value="1"/>
</dbReference>
<dbReference type="InterPro" id="IPR007457">
    <property type="entry name" value="Fe_traffick_prot_YggX"/>
</dbReference>
<dbReference type="InterPro" id="IPR036766">
    <property type="entry name" value="Fe_traffick_prot_YggX_sf"/>
</dbReference>
<dbReference type="NCBIfam" id="NF003817">
    <property type="entry name" value="PRK05408.1"/>
    <property type="match status" value="1"/>
</dbReference>
<dbReference type="PANTHER" id="PTHR36965">
    <property type="entry name" value="FE(2+)-TRAFFICKING PROTEIN-RELATED"/>
    <property type="match status" value="1"/>
</dbReference>
<dbReference type="PANTHER" id="PTHR36965:SF1">
    <property type="entry name" value="FE(2+)-TRAFFICKING PROTEIN-RELATED"/>
    <property type="match status" value="1"/>
</dbReference>
<dbReference type="Pfam" id="PF04362">
    <property type="entry name" value="Iron_traffic"/>
    <property type="match status" value="1"/>
</dbReference>
<dbReference type="PIRSF" id="PIRSF029827">
    <property type="entry name" value="Fe_traffic_YggX"/>
    <property type="match status" value="1"/>
</dbReference>
<dbReference type="SUPFAM" id="SSF111148">
    <property type="entry name" value="YggX-like"/>
    <property type="match status" value="1"/>
</dbReference>
<organism>
    <name type="scientific">Bordetella parapertussis (strain 12822 / ATCC BAA-587 / NCTC 13253)</name>
    <dbReference type="NCBI Taxonomy" id="257311"/>
    <lineage>
        <taxon>Bacteria</taxon>
        <taxon>Pseudomonadati</taxon>
        <taxon>Pseudomonadota</taxon>
        <taxon>Betaproteobacteria</taxon>
        <taxon>Burkholderiales</taxon>
        <taxon>Alcaligenaceae</taxon>
        <taxon>Bordetella</taxon>
    </lineage>
</organism>
<evidence type="ECO:0000255" key="1">
    <source>
        <dbReference type="HAMAP-Rule" id="MF_00686"/>
    </source>
</evidence>
<name>FETP_BORPA</name>
<accession>Q7W9Q2</accession>
<protein>
    <recommendedName>
        <fullName evidence="1">Probable Fe(2+)-trafficking protein</fullName>
    </recommendedName>
</protein>
<keyword id="KW-0408">Iron</keyword>
<comment type="function">
    <text evidence="1">Could be a mediator in iron transactions between iron acquisition and iron-requiring processes, such as synthesis and/or repair of Fe-S clusters in biosynthetic enzymes.</text>
</comment>
<comment type="similarity">
    <text evidence="1">Belongs to the Fe(2+)-trafficking protein family.</text>
</comment>
<gene>
    <name type="ordered locus">BPP1703</name>
</gene>